<evidence type="ECO:0000250" key="1"/>
<evidence type="ECO:0000250" key="2">
    <source>
        <dbReference type="UniProtKB" id="O49519"/>
    </source>
</evidence>
<evidence type="ECO:0000255" key="3"/>
<evidence type="ECO:0000256" key="4">
    <source>
        <dbReference type="SAM" id="MobiDB-lite"/>
    </source>
</evidence>
<evidence type="ECO:0000269" key="5">
    <source>
    </source>
</evidence>
<evidence type="ECO:0000269" key="6">
    <source>
    </source>
</evidence>
<evidence type="ECO:0000303" key="7">
    <source>
    </source>
</evidence>
<evidence type="ECO:0000305" key="8"/>
<name>TDIF_ZINEL</name>
<feature type="signal peptide" evidence="3">
    <location>
        <begin position="1"/>
        <end position="26"/>
    </location>
</feature>
<feature type="chain" id="PRO_0000401231" description="CLAVATA3/ESR (CLE)-related protein TDIF">
    <location>
        <begin position="27"/>
        <end position="132"/>
    </location>
</feature>
<feature type="peptide" id="PRO_0000401232" description="TDIFp" evidence="5">
    <location>
        <begin position="120"/>
        <end position="131"/>
    </location>
</feature>
<feature type="transmembrane region" description="Helical" evidence="3">
    <location>
        <begin position="42"/>
        <end position="62"/>
    </location>
</feature>
<feature type="region of interest" description="Disordered" evidence="4">
    <location>
        <begin position="68"/>
        <end position="132"/>
    </location>
</feature>
<feature type="compositionally biased region" description="Polar residues" evidence="4">
    <location>
        <begin position="68"/>
        <end position="77"/>
    </location>
</feature>
<feature type="compositionally biased region" description="Low complexity" evidence="4">
    <location>
        <begin position="87"/>
        <end position="96"/>
    </location>
</feature>
<feature type="compositionally biased region" description="Basic residues" evidence="4">
    <location>
        <begin position="101"/>
        <end position="111"/>
    </location>
</feature>
<feature type="modified residue" description="Hydroxyproline" evidence="5">
    <location>
        <position position="123"/>
    </location>
</feature>
<feature type="modified residue" description="Hydroxyproline" evidence="5">
    <location>
        <position position="126"/>
    </location>
</feature>
<feature type="glycosylation site" description="O-linked (Ara...) hydroxyproline" evidence="2">
    <location>
        <position position="126"/>
    </location>
</feature>
<feature type="mutagenesis site" description="Impaired repression of tracheary element differentiation." evidence="5">
    <original>H</original>
    <variation>A</variation>
    <location>
        <position position="120"/>
    </location>
</feature>
<feature type="mutagenesis site" description="No visible effect on tracheary element differentiation." evidence="5">
    <original>E</original>
    <variation>A</variation>
    <location>
        <position position="121"/>
    </location>
</feature>
<feature type="mutagenesis site" description="Impaired repression of tracheary element differentiation." evidence="5">
    <original>V</original>
    <variation>A</variation>
    <location>
        <position position="122"/>
    </location>
</feature>
<feature type="mutagenesis site" description="No visible effect on tracheary element differentiation." evidence="5">
    <original>S</original>
    <variation>A</variation>
    <location>
        <position position="124"/>
    </location>
</feature>
<feature type="mutagenesis site" description="Impaired repression of tracheary element differentiation." evidence="5">
    <original>G</original>
    <variation>A</variation>
    <location>
        <position position="125"/>
    </location>
</feature>
<feature type="mutagenesis site" description="No visible effect on tracheary element differentiation." evidence="5">
    <original>P</original>
    <variation>A</variation>
    <location>
        <position position="126"/>
    </location>
</feature>
<feature type="mutagenesis site" description="Impaired repression of tracheary element differentiation." evidence="5">
    <original>N</original>
    <variation>A</variation>
    <location>
        <position position="127"/>
    </location>
</feature>
<feature type="mutagenesis site" description="Impaired repression of tracheary element differentiation." evidence="5 6">
    <original>P</original>
    <variation>A</variation>
    <location>
        <position position="128"/>
    </location>
</feature>
<feature type="mutagenesis site" description="No visible effect on tracheary element differentiation." evidence="5">
    <original>I</original>
    <variation>A</variation>
    <location>
        <position position="129"/>
    </location>
</feature>
<feature type="mutagenesis site" description="No visible effect on tracheary element differentiation." evidence="5">
    <original>S</original>
    <variation>A</variation>
    <location>
        <position position="130"/>
    </location>
</feature>
<feature type="mutagenesis site" description="Impaired repression of tracheary element differentiation." evidence="5">
    <original>N</original>
    <variation>A</variation>
    <location>
        <position position="131"/>
    </location>
</feature>
<proteinExistence type="evidence at protein level"/>
<keyword id="KW-1003">Cell membrane</keyword>
<keyword id="KW-0217">Developmental protein</keyword>
<keyword id="KW-0221">Differentiation</keyword>
<keyword id="KW-0903">Direct protein sequencing</keyword>
<keyword id="KW-0325">Glycoprotein</keyword>
<keyword id="KW-0379">Hydroxylation</keyword>
<keyword id="KW-0472">Membrane</keyword>
<keyword id="KW-0964">Secreted</keyword>
<keyword id="KW-0732">Signal</keyword>
<keyword id="KW-0812">Transmembrane</keyword>
<keyword id="KW-1133">Transmembrane helix</keyword>
<gene>
    <name evidence="7" type="primary">TDIF</name>
</gene>
<organism>
    <name type="scientific">Zinnia elegans</name>
    <name type="common">Garden zinnia</name>
    <name type="synonym">Zinnia violacea</name>
    <dbReference type="NCBI Taxonomy" id="34245"/>
    <lineage>
        <taxon>Eukaryota</taxon>
        <taxon>Viridiplantae</taxon>
        <taxon>Streptophyta</taxon>
        <taxon>Embryophyta</taxon>
        <taxon>Tracheophyta</taxon>
        <taxon>Spermatophyta</taxon>
        <taxon>Magnoliopsida</taxon>
        <taxon>eudicotyledons</taxon>
        <taxon>Gunneridae</taxon>
        <taxon>Pentapetalae</taxon>
        <taxon>asterids</taxon>
        <taxon>campanulids</taxon>
        <taxon>Asterales</taxon>
        <taxon>Asteraceae</taxon>
        <taxon>Asteroideae</taxon>
        <taxon>Heliantheae alliance</taxon>
        <taxon>Heliantheae</taxon>
        <taxon>Zinnia</taxon>
    </lineage>
</organism>
<protein>
    <recommendedName>
        <fullName evidence="7">CLAVATA3/ESR (CLE)-related protein TDIF</fullName>
    </recommendedName>
    <alternativeName>
        <fullName evidence="7">Tracheary element differentiation inhibitory factor</fullName>
    </alternativeName>
    <component>
        <recommendedName>
            <fullName evidence="7">TDIFp</fullName>
        </recommendedName>
    </component>
</protein>
<sequence length="132" mass="14664">MDIDLLWSFGGWFFILFPETINYCMAKLRSTSQISHFTNPRSCSSLFFVALLIITILITMLQSSTSMEVTSLPTHQPTSSNSHDESSTSSTATTTTDLHPKRTHHQSHPKPTRSFEAGAHEVPSGPNPISNR</sequence>
<comment type="function">
    <molecule>TDIFp</molecule>
    <text evidence="5 6">Extracellular signal peptide that regulates cell fate. Represses tracheary element differentiation but promotes the formation of procambial cells adjacent to phloem cells in the veins.</text>
</comment>
<comment type="subunit">
    <molecule>TDIFp</molecule>
    <text evidence="1">Interacts specifically with the leucine-rich repeat receptor-like protein kinase TDR.</text>
</comment>
<comment type="subcellular location">
    <molecule>TDIFp</molecule>
    <subcellularLocation>
        <location evidence="5">Secreted</location>
        <location evidence="5">Extracellular space</location>
    </subcellularLocation>
</comment>
<comment type="subcellular location">
    <molecule>CLAVATA3/ESR (CLE)-related protein TDIF</molecule>
    <subcellularLocation>
        <location evidence="8">Cell membrane</location>
        <topology evidence="8">Single-pass membrane protein</topology>
    </subcellularLocation>
</comment>
<comment type="PTM">
    <molecule>TDIFp</molecule>
    <text evidence="5">The TDIFp peptide contains two hydroxprolines, but hydroxylation had no direct effect on TDIFp activity.</text>
</comment>
<comment type="PTM">
    <molecule>TDIFp</molecule>
    <text evidence="2">The O-glycosylation (arabinosylation) of the hydroxyproline Pro-126 enhances binding affinity of the TDIFp peptide for its receptor.</text>
</comment>
<comment type="similarity">
    <text evidence="8">Belongs to the CLV3/ESR signal peptide family.</text>
</comment>
<accession>A1EC31</accession>
<reference key="1">
    <citation type="journal article" date="2006" name="Science">
        <title>Dodeca-CLE peptides as suppressors of plant stem cell differentiation.</title>
        <authorList>
            <person name="Ito Y."/>
            <person name="Nakanomyo I."/>
            <person name="Motose H."/>
            <person name="Iwamoto K."/>
            <person name="Sawa S."/>
            <person name="Dohmae N."/>
            <person name="Fukuda H."/>
        </authorList>
    </citation>
    <scope>NUCLEOTIDE SEQUENCE [MRNA]</scope>
    <scope>PROTEIN SEQUENCE OF 120-131</scope>
    <scope>FUNCTION</scope>
    <scope>HYDROXYLATION AT PRO-123 AND PRO-126</scope>
    <scope>MUTAGENESIS OF HIS-120; GLU-121; VAL-122; SER-124; GLY-125; PRO-126; ASN-127; PRO-128; ILE-129; SER-130 AND ASN-131</scope>
    <scope>SUBCELLULAR LOCATION</scope>
</reference>
<reference key="2">
    <citation type="journal article" date="2008" name="Cell. Mol. Life Sci.">
        <title>The CLE family of plant polypeptide signaling molecules.</title>
        <authorList>
            <person name="Jun J.H."/>
            <person name="Fiume E."/>
            <person name="Fletcher J.C."/>
        </authorList>
    </citation>
    <scope>REVIEW</scope>
</reference>
<reference key="3">
    <citation type="journal article" date="2008" name="Proc. Natl. Acad. Sci. U.S.A.">
        <title>Non-cell-autonomous control of vascular stem cell fate by a CLE peptide/receptor system.</title>
        <authorList>
            <person name="Hirakawa Y."/>
            <person name="Shinohara H."/>
            <person name="Kondo Y."/>
            <person name="Inoue A."/>
            <person name="Nakanomyo I."/>
            <person name="Ogawa M."/>
            <person name="Sawa S."/>
            <person name="Ohashi-Ito K."/>
            <person name="Matsubayashi Y."/>
            <person name="Fukuda H."/>
        </authorList>
    </citation>
    <scope>FUNCTION</scope>
    <scope>MUTAGENESIS OF PRO-128</scope>
</reference>
<reference key="4">
    <citation type="journal article" date="2010" name="Protoplasma">
        <title>CLE peptide signaling during plant development.</title>
        <authorList>
            <person name="Wang G."/>
            <person name="Fiers M."/>
        </authorList>
    </citation>
    <scope>REVIEW</scope>
</reference>
<dbReference type="EMBL" id="EF121243">
    <property type="protein sequence ID" value="ABL67522.1"/>
    <property type="molecule type" value="mRNA"/>
</dbReference>
<dbReference type="GlyCosmos" id="A1EC31">
    <property type="glycosylation" value="1 site, No reported glycans"/>
</dbReference>
<dbReference type="GO" id="GO:0048046">
    <property type="term" value="C:apoplast"/>
    <property type="evidence" value="ECO:0000250"/>
    <property type="project" value="UniProtKB"/>
</dbReference>
<dbReference type="GO" id="GO:0005886">
    <property type="term" value="C:plasma membrane"/>
    <property type="evidence" value="ECO:0007669"/>
    <property type="project" value="UniProtKB-SubCell"/>
</dbReference>
<dbReference type="GO" id="GO:0033612">
    <property type="term" value="F:receptor serine/threonine kinase binding"/>
    <property type="evidence" value="ECO:0000250"/>
    <property type="project" value="UniProtKB"/>
</dbReference>
<dbReference type="GO" id="GO:0045168">
    <property type="term" value="P:cell-cell signaling involved in cell fate commitment"/>
    <property type="evidence" value="ECO:0000250"/>
    <property type="project" value="UniProtKB"/>
</dbReference>
<dbReference type="GO" id="GO:0010087">
    <property type="term" value="P:phloem or xylem histogenesis"/>
    <property type="evidence" value="ECO:0000250"/>
    <property type="project" value="UniProtKB"/>
</dbReference>
<dbReference type="GO" id="GO:0010067">
    <property type="term" value="P:procambium histogenesis"/>
    <property type="evidence" value="ECO:0000250"/>
    <property type="project" value="UniProtKB"/>
</dbReference>
<dbReference type="GO" id="GO:0010089">
    <property type="term" value="P:xylem development"/>
    <property type="evidence" value="ECO:0000250"/>
    <property type="project" value="UniProtKB"/>
</dbReference>
<dbReference type="InterPro" id="IPR037495">
    <property type="entry name" value="CLE41/42/44"/>
</dbReference>
<dbReference type="PANTHER" id="PTHR35301">
    <property type="entry name" value="CLAVATA3/ESR (CLE)-RELATED PROTEIN 41-RELATED"/>
    <property type="match status" value="1"/>
</dbReference>
<dbReference type="PANTHER" id="PTHR35301:SF1">
    <property type="entry name" value="CLAVATA3_ESR (CLE)-RELATED PROTEIN 41-RELATED"/>
    <property type="match status" value="1"/>
</dbReference>